<keyword id="KW-0147">Chitin-binding</keyword>
<keyword id="KW-1015">Disulfide bond</keyword>
<keyword id="KW-0325">Glycoprotein</keyword>
<keyword id="KW-1185">Reference proteome</keyword>
<keyword id="KW-0677">Repeat</keyword>
<keyword id="KW-0732">Signal</keyword>
<proteinExistence type="evidence at transcript level"/>
<organism>
    <name type="scientific">Anopheles gambiae</name>
    <name type="common">African malaria mosquito</name>
    <dbReference type="NCBI Taxonomy" id="7165"/>
    <lineage>
        <taxon>Eukaryota</taxon>
        <taxon>Metazoa</taxon>
        <taxon>Ecdysozoa</taxon>
        <taxon>Arthropoda</taxon>
        <taxon>Hexapoda</taxon>
        <taxon>Insecta</taxon>
        <taxon>Pterygota</taxon>
        <taxon>Neoptera</taxon>
        <taxon>Endopterygota</taxon>
        <taxon>Diptera</taxon>
        <taxon>Nematocera</taxon>
        <taxon>Culicoidea</taxon>
        <taxon>Culicidae</taxon>
        <taxon>Anophelinae</taxon>
        <taxon>Anopheles</taxon>
    </lineage>
</organism>
<sequence>MKVSASLVLLLAAAVLADDRCPPQDDPEQPPVLLAHPTDCDKFLICNHGTPVVSKCPPGLLWNDSQKQCDYPAQAQCAPGVTPNTEPAPKPSPNCPPEYDPDHMVYIPHETDCGKYYICDPYGVELEQTCPSGLHWNPVVNYCDFPELAQCEE</sequence>
<name>PE1_ANOGA</name>
<dbReference type="EMBL" id="AF030431">
    <property type="protein sequence ID" value="AAC39127.1"/>
    <property type="molecule type" value="mRNA"/>
</dbReference>
<dbReference type="EMBL" id="AY750997">
    <property type="protein sequence ID" value="AAV31069.1"/>
    <property type="molecule type" value="Genomic_DNA"/>
</dbReference>
<dbReference type="EMBL" id="AY344823">
    <property type="protein sequence ID" value="AAR02434.1"/>
    <property type="molecule type" value="Genomic_DNA"/>
</dbReference>
<dbReference type="EMBL" id="AY344824">
    <property type="protein sequence ID" value="AAR02435.1"/>
    <property type="molecule type" value="Genomic_DNA"/>
</dbReference>
<dbReference type="EMBL" id="AY344825">
    <property type="protein sequence ID" value="AAR02436.1"/>
    <property type="molecule type" value="Genomic_DNA"/>
</dbReference>
<dbReference type="EMBL" id="AY344826">
    <property type="protein sequence ID" value="AAR02437.1"/>
    <property type="molecule type" value="Genomic_DNA"/>
</dbReference>
<dbReference type="EMBL" id="AY344827">
    <property type="protein sequence ID" value="AAR02438.1"/>
    <property type="molecule type" value="Genomic_DNA"/>
</dbReference>
<dbReference type="EMBL" id="AY344828">
    <property type="protein sequence ID" value="AAR02439.1"/>
    <property type="molecule type" value="Genomic_DNA"/>
</dbReference>
<dbReference type="EMBL" id="AAAB01008807">
    <property type="protein sequence ID" value="EAA04177.3"/>
    <property type="molecule type" value="Genomic_DNA"/>
</dbReference>
<dbReference type="RefSeq" id="XP_308952.3">
    <property type="nucleotide sequence ID" value="XM_308952.3"/>
</dbReference>
<dbReference type="SMR" id="O76217"/>
<dbReference type="STRING" id="7165.O76217"/>
<dbReference type="CAZy" id="CBM14">
    <property type="family name" value="Carbohydrate-Binding Module Family 14"/>
</dbReference>
<dbReference type="GlyCosmos" id="O76217">
    <property type="glycosylation" value="1 site, No reported glycans"/>
</dbReference>
<dbReference type="PaxDb" id="7165-AGAP006795-PA"/>
<dbReference type="GeneID" id="1270270"/>
<dbReference type="KEGG" id="aga:1270270"/>
<dbReference type="VEuPathDB" id="VectorBase:AGAMI1_009230"/>
<dbReference type="VEuPathDB" id="VectorBase:AGAP006795"/>
<dbReference type="eggNOG" id="ENOG502R6AT">
    <property type="taxonomic scope" value="Eukaryota"/>
</dbReference>
<dbReference type="HOGENOM" id="CLU_1682355_0_0_1"/>
<dbReference type="InParanoid" id="O76217"/>
<dbReference type="Proteomes" id="UP000007062">
    <property type="component" value="Chromosome 2L"/>
</dbReference>
<dbReference type="GO" id="GO:0005576">
    <property type="term" value="C:extracellular region"/>
    <property type="evidence" value="ECO:0007669"/>
    <property type="project" value="InterPro"/>
</dbReference>
<dbReference type="GO" id="GO:0008061">
    <property type="term" value="F:chitin binding"/>
    <property type="evidence" value="ECO:0007669"/>
    <property type="project" value="UniProtKB-KW"/>
</dbReference>
<dbReference type="Gene3D" id="2.170.140.10">
    <property type="entry name" value="Chitin binding domain"/>
    <property type="match status" value="2"/>
</dbReference>
<dbReference type="InterPro" id="IPR002557">
    <property type="entry name" value="Chitin-bd_dom"/>
</dbReference>
<dbReference type="InterPro" id="IPR036508">
    <property type="entry name" value="Chitin-bd_dom_sf"/>
</dbReference>
<dbReference type="InterPro" id="IPR051940">
    <property type="entry name" value="Chitin_bind-dev_reg"/>
</dbReference>
<dbReference type="PANTHER" id="PTHR23301">
    <property type="entry name" value="CHITIN BINDING PERITROPHIN-A"/>
    <property type="match status" value="1"/>
</dbReference>
<dbReference type="PANTHER" id="PTHR23301:SF0">
    <property type="entry name" value="CHITIN-BINDING TYPE-2 DOMAIN-CONTAINING PROTEIN-RELATED"/>
    <property type="match status" value="1"/>
</dbReference>
<dbReference type="Pfam" id="PF01607">
    <property type="entry name" value="CBM_14"/>
    <property type="match status" value="2"/>
</dbReference>
<dbReference type="SMART" id="SM00494">
    <property type="entry name" value="ChtBD2"/>
    <property type="match status" value="2"/>
</dbReference>
<dbReference type="SUPFAM" id="SSF57625">
    <property type="entry name" value="Invertebrate chitin-binding proteins"/>
    <property type="match status" value="2"/>
</dbReference>
<dbReference type="PROSITE" id="PS50940">
    <property type="entry name" value="CHIT_BIND_II"/>
    <property type="match status" value="2"/>
</dbReference>
<reference key="1">
    <citation type="journal article" date="1998" name="J. Biol. Chem.">
        <title>A type I peritrophic matrix protein from the malaria vector Anopheles gambiae binds to chitin. Cloning, expression, and characterization.</title>
        <authorList>
            <person name="Shen Z."/>
            <person name="Jacobs-Lorena M."/>
        </authorList>
    </citation>
    <scope>NUCLEOTIDE SEQUENCE [MRNA]</scope>
    <scope>FUNCTION</scope>
    <scope>TISSUE SPECIFICITY</scope>
    <source>
        <strain>G3</strain>
        <tissue>Midgut</tissue>
    </source>
</reference>
<reference key="2">
    <citation type="submission" date="2004-09" db="EMBL/GenBank/DDBJ databases">
        <title>Anopheles peritrophic matrix protein-1 (AgAper-1) regulatory sequences mediate transgenic protein accumulation and secretion into the midgut lumen upon blood ingestion.</title>
        <authorList>
            <person name="Abraham E.G."/>
            <person name="Donnelly-Doman M."/>
            <person name="Fujioka H."/>
            <person name="Ghosh A."/>
            <person name="Moreira L."/>
            <person name="Jacobs-Lorena M."/>
        </authorList>
    </citation>
    <scope>NUCLEOTIDE SEQUENCE [GENOMIC DNA]</scope>
</reference>
<reference key="3">
    <citation type="journal article" date="2004" name="Am. J. Trop. Med. Hyg.">
        <title>Intraspecific nucleotide variation in Anopheles gambiae: new insights into the biology of malaria vectors.</title>
        <authorList>
            <person name="Morlais I."/>
            <person name="Poncon N."/>
            <person name="Simard F."/>
            <person name="Cohuet A."/>
            <person name="Fontenille D."/>
        </authorList>
    </citation>
    <scope>NUCLEOTIDE SEQUENCE [GENOMIC DNA]</scope>
    <source>
        <strain>4aRR</strain>
        <strain>L3-5</strain>
        <strain>L3-51</strain>
        <strain>Yaounde Yd21</strain>
        <strain>Yaounde Yd35</strain>
        <strain>Yaounde Yd41</strain>
    </source>
</reference>
<reference key="4">
    <citation type="journal article" date="2002" name="Science">
        <title>The genome sequence of the malaria mosquito Anopheles gambiae.</title>
        <authorList>
            <person name="Holt R.A."/>
            <person name="Subramanian G.M."/>
            <person name="Halpern A."/>
            <person name="Sutton G.G."/>
            <person name="Charlab R."/>
            <person name="Nusskern D.R."/>
            <person name="Wincker P."/>
            <person name="Clark A.G."/>
            <person name="Ribeiro J.M.C."/>
            <person name="Wides R."/>
            <person name="Salzberg S.L."/>
            <person name="Loftus B.J."/>
            <person name="Yandell M.D."/>
            <person name="Majoros W.H."/>
            <person name="Rusch D.B."/>
            <person name="Lai Z."/>
            <person name="Kraft C.L."/>
            <person name="Abril J.F."/>
            <person name="Anthouard V."/>
            <person name="Arensburger P."/>
            <person name="Atkinson P.W."/>
            <person name="Baden H."/>
            <person name="de Berardinis V."/>
            <person name="Baldwin D."/>
            <person name="Benes V."/>
            <person name="Biedler J."/>
            <person name="Blass C."/>
            <person name="Bolanos R."/>
            <person name="Boscus D."/>
            <person name="Barnstead M."/>
            <person name="Cai S."/>
            <person name="Center A."/>
            <person name="Chaturverdi K."/>
            <person name="Christophides G.K."/>
            <person name="Chrystal M.A.M."/>
            <person name="Clamp M."/>
            <person name="Cravchik A."/>
            <person name="Curwen V."/>
            <person name="Dana A."/>
            <person name="Delcher A."/>
            <person name="Dew I."/>
            <person name="Evans C.A."/>
            <person name="Flanigan M."/>
            <person name="Grundschober-Freimoser A."/>
            <person name="Friedli L."/>
            <person name="Gu Z."/>
            <person name="Guan P."/>
            <person name="Guigo R."/>
            <person name="Hillenmeyer M.E."/>
            <person name="Hladun S.L."/>
            <person name="Hogan J.R."/>
            <person name="Hong Y.S."/>
            <person name="Hoover J."/>
            <person name="Jaillon O."/>
            <person name="Ke Z."/>
            <person name="Kodira C.D."/>
            <person name="Kokoza E."/>
            <person name="Koutsos A."/>
            <person name="Letunic I."/>
            <person name="Levitsky A.A."/>
            <person name="Liang Y."/>
            <person name="Lin J.-J."/>
            <person name="Lobo N.F."/>
            <person name="Lopez J.R."/>
            <person name="Malek J.A."/>
            <person name="McIntosh T.C."/>
            <person name="Meister S."/>
            <person name="Miller J.R."/>
            <person name="Mobarry C."/>
            <person name="Mongin E."/>
            <person name="Murphy S.D."/>
            <person name="O'Brochta D.A."/>
            <person name="Pfannkoch C."/>
            <person name="Qi R."/>
            <person name="Regier M.A."/>
            <person name="Remington K."/>
            <person name="Shao H."/>
            <person name="Sharakhova M.V."/>
            <person name="Sitter C.D."/>
            <person name="Shetty J."/>
            <person name="Smith T.J."/>
            <person name="Strong R."/>
            <person name="Sun J."/>
            <person name="Thomasova D."/>
            <person name="Ton L.Q."/>
            <person name="Topalis P."/>
            <person name="Tu Z.J."/>
            <person name="Unger M.F."/>
            <person name="Walenz B."/>
            <person name="Wang A.H."/>
            <person name="Wang J."/>
            <person name="Wang M."/>
            <person name="Wang X."/>
            <person name="Woodford K.J."/>
            <person name="Wortman J.R."/>
            <person name="Wu M."/>
            <person name="Yao A."/>
            <person name="Zdobnov E.M."/>
            <person name="Zhang H."/>
            <person name="Zhao Q."/>
            <person name="Zhao S."/>
            <person name="Zhu S.C."/>
            <person name="Zhimulev I."/>
            <person name="Coluzzi M."/>
            <person name="della Torre A."/>
            <person name="Roth C.W."/>
            <person name="Louis C."/>
            <person name="Kalush F."/>
            <person name="Mural R.J."/>
            <person name="Myers E.W."/>
            <person name="Adams M.D."/>
            <person name="Smith H.O."/>
            <person name="Broder S."/>
            <person name="Gardner M.J."/>
            <person name="Fraser C.M."/>
            <person name="Birney E."/>
            <person name="Bork P."/>
            <person name="Brey P.T."/>
            <person name="Venter J.C."/>
            <person name="Weissenbach J."/>
            <person name="Kafatos F.C."/>
            <person name="Collins F.H."/>
            <person name="Hoffman S.L."/>
        </authorList>
    </citation>
    <scope>NUCLEOTIDE SEQUENCE [LARGE SCALE GENOMIC DNA]</scope>
    <source>
        <strain>PEST</strain>
    </source>
</reference>
<accession>O76217</accession>
<accession>Q6VAW1</accession>
<accession>Q6VAW2</accession>
<accession>Q6VAW4</accession>
<accession>Q6VAW5</accession>
<accession>Q6VAW6</accession>
<accession>Q7QID7</accession>
<evidence type="ECO:0000255" key="1"/>
<evidence type="ECO:0000255" key="2">
    <source>
        <dbReference type="PROSITE-ProRule" id="PRU00144"/>
    </source>
</evidence>
<evidence type="ECO:0000269" key="3">
    <source>
    </source>
</evidence>
<feature type="signal peptide" evidence="1">
    <location>
        <begin position="1"/>
        <end position="17"/>
    </location>
</feature>
<feature type="chain" id="PRO_0000023612" description="Peritrophin-1">
    <location>
        <begin position="18"/>
        <end position="153"/>
    </location>
</feature>
<feature type="domain" description="Chitin-binding type-2 1" evidence="2">
    <location>
        <begin position="18"/>
        <end position="79"/>
    </location>
</feature>
<feature type="domain" description="Chitin-binding type-2 2" evidence="2">
    <location>
        <begin position="92"/>
        <end position="153"/>
    </location>
</feature>
<feature type="glycosylation site" description="N-linked (GlcNAc...) asparagine" evidence="1">
    <location>
        <position position="63"/>
    </location>
</feature>
<feature type="disulfide bond" evidence="2">
    <location>
        <begin position="56"/>
        <end position="69"/>
    </location>
</feature>
<feature type="disulfide bond" evidence="2">
    <location>
        <begin position="130"/>
        <end position="143"/>
    </location>
</feature>
<feature type="sequence variant" description="In strain: 4aRR, PEST.">
    <original>L</original>
    <variation>V</variation>
    <location>
        <position position="7"/>
    </location>
</feature>
<feature type="sequence variant" description="In strain: 4aRR, PEST.">
    <original>D</original>
    <variation>V</variation>
    <location>
        <position position="19"/>
    </location>
</feature>
<feature type="sequence variant" description="In strain: L3-5.">
    <original>E</original>
    <variation>K</variation>
    <location>
        <position position="28"/>
    </location>
</feature>
<feature type="sequence variant" description="In strain: L3-5.">
    <original>P</original>
    <variation>S</variation>
    <location>
        <position position="37"/>
    </location>
</feature>
<feature type="sequence variant" description="In strain: Yaounde Yd41.">
    <original>K</original>
    <variation>Q</variation>
    <location>
        <position position="55"/>
    </location>
</feature>
<feature type="sequence variant" description="In strain: Yaounde Yd21, Yaounde Yd35, Yaounde Yd41.">
    <original>A</original>
    <variation>S</variation>
    <location>
        <position position="73"/>
    </location>
</feature>
<feature type="sequence variant" description="In strain: G3.">
    <original>A</original>
    <variation>V</variation>
    <location>
        <position position="88"/>
    </location>
</feature>
<feature type="sequence variant" description="In strain: 4aRR, PEST.">
    <original>P</original>
    <variation>S</variation>
    <location>
        <position position="89"/>
    </location>
</feature>
<gene>
    <name type="primary">Aper1</name>
    <name type="ORF">AGAP006795</name>
</gene>
<comment type="function">
    <text evidence="3">Binds chitin but not cellulose. May be involved in the spatial organization of PM.</text>
</comment>
<comment type="tissue specificity">
    <text evidence="3">Adult peritrophic membrane.</text>
</comment>
<comment type="developmental stage">
    <text>Expressed in adult but not larval guts, whole pupae or whole bodies minus gut.</text>
</comment>
<comment type="PTM">
    <text>Glycosylated.</text>
</comment>
<protein>
    <recommendedName>
        <fullName>Peritrophin-1</fullName>
    </recommendedName>
    <alternativeName>
        <fullName>AgAper-1</fullName>
    </alternativeName>
    <alternativeName>
        <fullName>Peritrophic matrix protein 1</fullName>
    </alternativeName>
    <alternativeName>
        <fullName>Peritrophin A</fullName>
    </alternativeName>
</protein>